<keyword id="KW-0275">Fatty acid biosynthesis</keyword>
<keyword id="KW-0276">Fatty acid metabolism</keyword>
<keyword id="KW-0444">Lipid biosynthesis</keyword>
<keyword id="KW-0443">Lipid metabolism</keyword>
<keyword id="KW-0520">NAD</keyword>
<keyword id="KW-0560">Oxidoreductase</keyword>
<gene>
    <name evidence="1" type="primary">fabV</name>
    <name type="ordered locus">BMA10247_0692</name>
</gene>
<dbReference type="EC" id="1.3.1.9" evidence="1"/>
<dbReference type="EMBL" id="CP000548">
    <property type="protein sequence ID" value="ABO05362.1"/>
    <property type="molecule type" value="Genomic_DNA"/>
</dbReference>
<dbReference type="RefSeq" id="WP_004266854.1">
    <property type="nucleotide sequence ID" value="NZ_CP007802.1"/>
</dbReference>
<dbReference type="SMR" id="A3MJ23"/>
<dbReference type="KEGG" id="bmaz:BM44_2366"/>
<dbReference type="KEGG" id="bmn:BMA10247_0692"/>
<dbReference type="PATRIC" id="fig|320389.8.peg.2653"/>
<dbReference type="UniPathway" id="UPA00094"/>
<dbReference type="GO" id="GO:0004318">
    <property type="term" value="F:enoyl-[acyl-carrier-protein] reductase (NADH) activity"/>
    <property type="evidence" value="ECO:0007669"/>
    <property type="project" value="UniProtKB-UniRule"/>
</dbReference>
<dbReference type="GO" id="GO:0051287">
    <property type="term" value="F:NAD binding"/>
    <property type="evidence" value="ECO:0007669"/>
    <property type="project" value="UniProtKB-UniRule"/>
</dbReference>
<dbReference type="GO" id="GO:0050343">
    <property type="term" value="F:trans-2-enoyl-CoA reductase (NADH) activity"/>
    <property type="evidence" value="ECO:0007669"/>
    <property type="project" value="TreeGrafter"/>
</dbReference>
<dbReference type="GO" id="GO:0006633">
    <property type="term" value="P:fatty acid biosynthetic process"/>
    <property type="evidence" value="ECO:0007669"/>
    <property type="project" value="UniProtKB-UniRule"/>
</dbReference>
<dbReference type="FunFam" id="3.40.50.720:FF:000221">
    <property type="entry name" value="Enoyl-[acyl-carrier-protein] reductase [NADH]"/>
    <property type="match status" value="1"/>
</dbReference>
<dbReference type="Gene3D" id="3.40.50.720">
    <property type="entry name" value="NAD(P)-binding Rossmann-like Domain"/>
    <property type="match status" value="1"/>
</dbReference>
<dbReference type="HAMAP" id="MF_01838">
    <property type="entry name" value="FabV_reductase"/>
    <property type="match status" value="1"/>
</dbReference>
<dbReference type="InterPro" id="IPR024906">
    <property type="entry name" value="Eno_Rdtase_FAD-bd_dom"/>
</dbReference>
<dbReference type="InterPro" id="IPR024910">
    <property type="entry name" value="Enoyl-CoA_Rdtase_cat_dom"/>
</dbReference>
<dbReference type="InterPro" id="IPR050048">
    <property type="entry name" value="FabV-like_NADH_b"/>
</dbReference>
<dbReference type="InterPro" id="IPR010758">
    <property type="entry name" value="Trans-2-enoyl-CoA_reductase"/>
</dbReference>
<dbReference type="NCBIfam" id="NF043048">
    <property type="entry name" value="EnoyACPredFabV"/>
    <property type="match status" value="1"/>
</dbReference>
<dbReference type="NCBIfam" id="NF010177">
    <property type="entry name" value="PRK13656.1"/>
    <property type="match status" value="1"/>
</dbReference>
<dbReference type="PANTHER" id="PTHR37480">
    <property type="entry name" value="ENOYL-[ACYL-CARRIER-PROTEIN] REDUCTASE [NADH]"/>
    <property type="match status" value="1"/>
</dbReference>
<dbReference type="PANTHER" id="PTHR37480:SF1">
    <property type="entry name" value="ENOYL-[ACYL-CARRIER-PROTEIN] REDUCTASE [NADH]"/>
    <property type="match status" value="1"/>
</dbReference>
<dbReference type="Pfam" id="PF07055">
    <property type="entry name" value="Eno-Rase_FAD_bd"/>
    <property type="match status" value="1"/>
</dbReference>
<dbReference type="Pfam" id="PF12242">
    <property type="entry name" value="Eno-Rase_NADH_b"/>
    <property type="match status" value="1"/>
</dbReference>
<dbReference type="Pfam" id="PF12241">
    <property type="entry name" value="Enoyl_reductase"/>
    <property type="match status" value="1"/>
</dbReference>
<organism>
    <name type="scientific">Burkholderia mallei (strain NCTC 10247)</name>
    <dbReference type="NCBI Taxonomy" id="320389"/>
    <lineage>
        <taxon>Bacteria</taxon>
        <taxon>Pseudomonadati</taxon>
        <taxon>Pseudomonadota</taxon>
        <taxon>Betaproteobacteria</taxon>
        <taxon>Burkholderiales</taxon>
        <taxon>Burkholderiaceae</taxon>
        <taxon>Burkholderia</taxon>
        <taxon>pseudomallei group</taxon>
    </lineage>
</organism>
<protein>
    <recommendedName>
        <fullName evidence="1">Enoyl-[acyl-carrier-protein] reductase [NADH]</fullName>
        <shortName evidence="1">ENR</shortName>
        <ecNumber evidence="1">1.3.1.9</ecNumber>
    </recommendedName>
</protein>
<comment type="function">
    <text evidence="1">Involved in the final reduction of the elongation cycle of fatty acid synthesis (FAS II). Catalyzes the reduction of a carbon-carbon double bond in an enoyl moiety that is covalently linked to an acyl carrier protein (ACP).</text>
</comment>
<comment type="catalytic activity">
    <reaction evidence="1">
        <text>a 2,3-saturated acyl-[ACP] + NAD(+) = a (2E)-enoyl-[ACP] + NADH + H(+)</text>
        <dbReference type="Rhea" id="RHEA:10240"/>
        <dbReference type="Rhea" id="RHEA-COMP:9925"/>
        <dbReference type="Rhea" id="RHEA-COMP:9926"/>
        <dbReference type="ChEBI" id="CHEBI:15378"/>
        <dbReference type="ChEBI" id="CHEBI:57540"/>
        <dbReference type="ChEBI" id="CHEBI:57945"/>
        <dbReference type="ChEBI" id="CHEBI:78784"/>
        <dbReference type="ChEBI" id="CHEBI:78785"/>
        <dbReference type="EC" id="1.3.1.9"/>
    </reaction>
</comment>
<comment type="pathway">
    <text evidence="1">Lipid metabolism; fatty acid biosynthesis.</text>
</comment>
<comment type="subunit">
    <text evidence="1">Monomer.</text>
</comment>
<comment type="similarity">
    <text evidence="1">Belongs to the TER reductase family.</text>
</comment>
<accession>A3MJ23</accession>
<sequence>MIIKPRVRGFICVTTHPAGCAASVREQIAYVARRGPIERGPKKVLVIGASTGYGLAARIAAAFGVGAATLGVFFERAPADAKPGTAGWYNSAAFHDEAAARGLQATSVNGDAFSDEIKHKTIDAIRRDLGQVDLVVYSVAAPRRTHPKTGVTHQSTLKPIGHAVRLRGIDTDNEAIKETLLQPATPDEIADTVAVMGGEDWRMWIDALDAAGVLADGAKTTAFTYLGEQVTHDIYWNGSIGEAKKDLDRTVLALRGKLAARGGDARVSVLKAVVTQASSAIPMMPLYLSLLFKVMKARSTHEGCIEQVDGLLRDSLYSAQPHVDAEGRLRADRLELDPAVQARVLELWDQVTDDNLYTLTDFAGYKAEFLRLFGFGIDGVDYDAPVEPNVRIPNLIE</sequence>
<name>FABV_BURM7</name>
<proteinExistence type="inferred from homology"/>
<feature type="chain" id="PRO_1000070469" description="Enoyl-[acyl-carrier-protein] reductase [NADH]">
    <location>
        <begin position="1"/>
        <end position="397"/>
    </location>
</feature>
<feature type="active site" description="Proton donor" evidence="1">
    <location>
        <position position="235"/>
    </location>
</feature>
<feature type="binding site" evidence="1">
    <location>
        <begin position="48"/>
        <end position="53"/>
    </location>
    <ligand>
        <name>NAD(+)</name>
        <dbReference type="ChEBI" id="CHEBI:57540"/>
    </ligand>
</feature>
<feature type="binding site" evidence="1">
    <location>
        <begin position="74"/>
        <end position="75"/>
    </location>
    <ligand>
        <name>NAD(+)</name>
        <dbReference type="ChEBI" id="CHEBI:57540"/>
    </ligand>
</feature>
<feature type="binding site" evidence="1">
    <location>
        <begin position="111"/>
        <end position="112"/>
    </location>
    <ligand>
        <name>NAD(+)</name>
        <dbReference type="ChEBI" id="CHEBI:57540"/>
    </ligand>
</feature>
<feature type="binding site" evidence="1">
    <location>
        <begin position="139"/>
        <end position="140"/>
    </location>
    <ligand>
        <name>NAD(+)</name>
        <dbReference type="ChEBI" id="CHEBI:57540"/>
    </ligand>
</feature>
<feature type="binding site" evidence="1">
    <location>
        <position position="225"/>
    </location>
    <ligand>
        <name>substrate</name>
    </ligand>
</feature>
<feature type="binding site" evidence="1">
    <location>
        <position position="244"/>
    </location>
    <ligand>
        <name>NAD(+)</name>
        <dbReference type="ChEBI" id="CHEBI:57540"/>
    </ligand>
</feature>
<feature type="binding site" evidence="1">
    <location>
        <begin position="273"/>
        <end position="275"/>
    </location>
    <ligand>
        <name>NAD(+)</name>
        <dbReference type="ChEBI" id="CHEBI:57540"/>
    </ligand>
</feature>
<feature type="site" description="Plays an important role in discriminating NADH against NADPH" evidence="1">
    <location>
        <position position="75"/>
    </location>
</feature>
<evidence type="ECO:0000255" key="1">
    <source>
        <dbReference type="HAMAP-Rule" id="MF_01838"/>
    </source>
</evidence>
<reference key="1">
    <citation type="journal article" date="2010" name="Genome Biol. Evol.">
        <title>Continuing evolution of Burkholderia mallei through genome reduction and large-scale rearrangements.</title>
        <authorList>
            <person name="Losada L."/>
            <person name="Ronning C.M."/>
            <person name="DeShazer D."/>
            <person name="Woods D."/>
            <person name="Fedorova N."/>
            <person name="Kim H.S."/>
            <person name="Shabalina S.A."/>
            <person name="Pearson T.R."/>
            <person name="Brinkac L."/>
            <person name="Tan P."/>
            <person name="Nandi T."/>
            <person name="Crabtree J."/>
            <person name="Badger J."/>
            <person name="Beckstrom-Sternberg S."/>
            <person name="Saqib M."/>
            <person name="Schutzer S.E."/>
            <person name="Keim P."/>
            <person name="Nierman W.C."/>
        </authorList>
    </citation>
    <scope>NUCLEOTIDE SEQUENCE [LARGE SCALE GENOMIC DNA]</scope>
    <source>
        <strain>NCTC 10247</strain>
    </source>
</reference>